<comment type="function">
    <text evidence="1">Together with the chaperonin GroEL, plays an essential role in assisting protein folding. The GroEL-GroES system forms a nano-cage that allows encapsulation of the non-native substrate proteins and provides a physical environment optimized to promote and accelerate protein folding. GroES binds to the apical surface of the GroEL ring, thereby capping the opening of the GroEL channel.</text>
</comment>
<comment type="subunit">
    <text evidence="1">Heptamer of 7 subunits arranged in a ring. Interacts with the chaperonin GroEL.</text>
</comment>
<comment type="subcellular location">
    <subcellularLocation>
        <location evidence="1">Cytoplasm</location>
    </subcellularLocation>
</comment>
<comment type="similarity">
    <text evidence="1">Belongs to the GroES chaperonin family.</text>
</comment>
<dbReference type="EMBL" id="CP000285">
    <property type="protein sequence ID" value="ABE59510.1"/>
    <property type="molecule type" value="Genomic_DNA"/>
</dbReference>
<dbReference type="RefSeq" id="WP_011507456.1">
    <property type="nucleotide sequence ID" value="NC_007963.1"/>
</dbReference>
<dbReference type="SMR" id="Q1QVJ8"/>
<dbReference type="STRING" id="290398.Csal_2159"/>
<dbReference type="GeneID" id="95334878"/>
<dbReference type="KEGG" id="csa:Csal_2159"/>
<dbReference type="eggNOG" id="COG0234">
    <property type="taxonomic scope" value="Bacteria"/>
</dbReference>
<dbReference type="HOGENOM" id="CLU_132825_1_1_6"/>
<dbReference type="OrthoDB" id="9806791at2"/>
<dbReference type="Proteomes" id="UP000000239">
    <property type="component" value="Chromosome"/>
</dbReference>
<dbReference type="GO" id="GO:0005737">
    <property type="term" value="C:cytoplasm"/>
    <property type="evidence" value="ECO:0007669"/>
    <property type="project" value="UniProtKB-SubCell"/>
</dbReference>
<dbReference type="GO" id="GO:0005524">
    <property type="term" value="F:ATP binding"/>
    <property type="evidence" value="ECO:0007669"/>
    <property type="project" value="InterPro"/>
</dbReference>
<dbReference type="GO" id="GO:0046872">
    <property type="term" value="F:metal ion binding"/>
    <property type="evidence" value="ECO:0007669"/>
    <property type="project" value="TreeGrafter"/>
</dbReference>
<dbReference type="GO" id="GO:0044183">
    <property type="term" value="F:protein folding chaperone"/>
    <property type="evidence" value="ECO:0007669"/>
    <property type="project" value="InterPro"/>
</dbReference>
<dbReference type="GO" id="GO:0051087">
    <property type="term" value="F:protein-folding chaperone binding"/>
    <property type="evidence" value="ECO:0007669"/>
    <property type="project" value="TreeGrafter"/>
</dbReference>
<dbReference type="GO" id="GO:0051082">
    <property type="term" value="F:unfolded protein binding"/>
    <property type="evidence" value="ECO:0007669"/>
    <property type="project" value="TreeGrafter"/>
</dbReference>
<dbReference type="GO" id="GO:0051085">
    <property type="term" value="P:chaperone cofactor-dependent protein refolding"/>
    <property type="evidence" value="ECO:0007669"/>
    <property type="project" value="TreeGrafter"/>
</dbReference>
<dbReference type="CDD" id="cd00320">
    <property type="entry name" value="cpn10"/>
    <property type="match status" value="1"/>
</dbReference>
<dbReference type="FunFam" id="2.30.33.40:FF:000001">
    <property type="entry name" value="10 kDa chaperonin"/>
    <property type="match status" value="1"/>
</dbReference>
<dbReference type="Gene3D" id="2.30.33.40">
    <property type="entry name" value="GroES chaperonin"/>
    <property type="match status" value="1"/>
</dbReference>
<dbReference type="HAMAP" id="MF_00580">
    <property type="entry name" value="CH10"/>
    <property type="match status" value="1"/>
</dbReference>
<dbReference type="InterPro" id="IPR020818">
    <property type="entry name" value="Chaperonin_GroES"/>
</dbReference>
<dbReference type="InterPro" id="IPR037124">
    <property type="entry name" value="Chaperonin_GroES_sf"/>
</dbReference>
<dbReference type="InterPro" id="IPR018369">
    <property type="entry name" value="Chaprnonin_Cpn10_CS"/>
</dbReference>
<dbReference type="InterPro" id="IPR011032">
    <property type="entry name" value="GroES-like_sf"/>
</dbReference>
<dbReference type="NCBIfam" id="NF001526">
    <property type="entry name" value="PRK00364.1-1"/>
    <property type="match status" value="1"/>
</dbReference>
<dbReference type="NCBIfam" id="NF001527">
    <property type="entry name" value="PRK00364.1-2"/>
    <property type="match status" value="1"/>
</dbReference>
<dbReference type="NCBIfam" id="NF001531">
    <property type="entry name" value="PRK00364.2-2"/>
    <property type="match status" value="1"/>
</dbReference>
<dbReference type="NCBIfam" id="NF001533">
    <property type="entry name" value="PRK00364.2-4"/>
    <property type="match status" value="1"/>
</dbReference>
<dbReference type="PANTHER" id="PTHR10772">
    <property type="entry name" value="10 KDA HEAT SHOCK PROTEIN"/>
    <property type="match status" value="1"/>
</dbReference>
<dbReference type="PANTHER" id="PTHR10772:SF58">
    <property type="entry name" value="CO-CHAPERONIN GROES"/>
    <property type="match status" value="1"/>
</dbReference>
<dbReference type="Pfam" id="PF00166">
    <property type="entry name" value="Cpn10"/>
    <property type="match status" value="1"/>
</dbReference>
<dbReference type="PRINTS" id="PR00297">
    <property type="entry name" value="CHAPERONIN10"/>
</dbReference>
<dbReference type="SMART" id="SM00883">
    <property type="entry name" value="Cpn10"/>
    <property type="match status" value="1"/>
</dbReference>
<dbReference type="SUPFAM" id="SSF50129">
    <property type="entry name" value="GroES-like"/>
    <property type="match status" value="1"/>
</dbReference>
<dbReference type="PROSITE" id="PS00681">
    <property type="entry name" value="CHAPERONINS_CPN10"/>
    <property type="match status" value="1"/>
</dbReference>
<gene>
    <name evidence="1" type="primary">groES</name>
    <name evidence="1" type="synonym">groS</name>
    <name type="ordered locus">Csal_2159</name>
</gene>
<evidence type="ECO:0000255" key="1">
    <source>
        <dbReference type="HAMAP-Rule" id="MF_00580"/>
    </source>
</evidence>
<keyword id="KW-0143">Chaperone</keyword>
<keyword id="KW-0963">Cytoplasm</keyword>
<keyword id="KW-1185">Reference proteome</keyword>
<protein>
    <recommendedName>
        <fullName evidence="1">Co-chaperonin GroES</fullName>
    </recommendedName>
    <alternativeName>
        <fullName evidence="1">10 kDa chaperonin</fullName>
    </alternativeName>
    <alternativeName>
        <fullName evidence="1">Chaperonin-10</fullName>
        <shortName evidence="1">Cpn10</shortName>
    </alternativeName>
</protein>
<accession>Q1QVJ8</accession>
<name>CH10_CHRSD</name>
<organism>
    <name type="scientific">Chromohalobacter salexigens (strain ATCC BAA-138 / DSM 3043 / CIP 106854 / NCIMB 13768 / 1H11)</name>
    <dbReference type="NCBI Taxonomy" id="290398"/>
    <lineage>
        <taxon>Bacteria</taxon>
        <taxon>Pseudomonadati</taxon>
        <taxon>Pseudomonadota</taxon>
        <taxon>Gammaproteobacteria</taxon>
        <taxon>Oceanospirillales</taxon>
        <taxon>Halomonadaceae</taxon>
        <taxon>Chromohalobacter</taxon>
    </lineage>
</organism>
<reference key="1">
    <citation type="journal article" date="2011" name="Stand. Genomic Sci.">
        <title>Complete genome sequence of the halophilic and highly halotolerant Chromohalobacter salexigens type strain (1H11(T)).</title>
        <authorList>
            <person name="Copeland A."/>
            <person name="O'Connor K."/>
            <person name="Lucas S."/>
            <person name="Lapidus A."/>
            <person name="Berry K.W."/>
            <person name="Detter J.C."/>
            <person name="Del Rio T.G."/>
            <person name="Hammon N."/>
            <person name="Dalin E."/>
            <person name="Tice H."/>
            <person name="Pitluck S."/>
            <person name="Bruce D."/>
            <person name="Goodwin L."/>
            <person name="Han C."/>
            <person name="Tapia R."/>
            <person name="Saunders E."/>
            <person name="Schmutz J."/>
            <person name="Brettin T."/>
            <person name="Larimer F."/>
            <person name="Land M."/>
            <person name="Hauser L."/>
            <person name="Vargas C."/>
            <person name="Nieto J.J."/>
            <person name="Kyrpides N.C."/>
            <person name="Ivanova N."/>
            <person name="Goker M."/>
            <person name="Klenk H.P."/>
            <person name="Csonka L.N."/>
            <person name="Woyke T."/>
        </authorList>
    </citation>
    <scope>NUCLEOTIDE SEQUENCE [LARGE SCALE GENOMIC DNA]</scope>
    <source>
        <strain>ATCC BAA-138 / DSM 3043 / CIP 106854 / NCIMB 13768 / 1H11</strain>
    </source>
</reference>
<feature type="chain" id="PRO_1000025234" description="Co-chaperonin GroES">
    <location>
        <begin position="1"/>
        <end position="96"/>
    </location>
</feature>
<proteinExistence type="inferred from homology"/>
<sequence>MKIRPLHDRVVVRRVEEEQKTAGGIVLPGNAQEKPTRGEVLAVGNGRILESGEVRPLDVKVGDTVIFKDGFGVEKQKIDGEEVLIMSESDILAVAE</sequence>